<sequence>MNLNFMPLLHAYNHASIDFHFNSSARDFCVHEVPLYEFSNKGEHAIIQVRKSGLSTLEMLQIFSQILGVKIAELGYAGLKDKNALTTQFVSLPKKYAPLLEKNTSNFQERNLKILSLNYHHNKIKLGHLKGNRFFMRFKKMTPLNAHKTKQVLEQIVQFGMPNYFGSQRFGKFNDNHKEGLKILQNEAKFKNQKLNAFLISSYQSYLFNSLLSKRLEISKIISDFSLKEGLEFFKQKNLNIHSNALKALKNQDHPFKILEGDVMCHYPYGKFFDALELEKESERFLKKEAVPMGLLDGKKALYAKNLSLEIEKEFQNHILSDHAKTLGSRRFFWVFVENLTSKYIKEKVQFELEFYLPKGSYASALLKEIKHQKGENNDEF</sequence>
<reference key="1">
    <citation type="journal article" date="2006" name="PLoS Genet.">
        <title>Who ate whom? Adaptive Helicobacter genomic changes that accompanied a host jump from early humans to large felines.</title>
        <authorList>
            <person name="Eppinger M."/>
            <person name="Baar C."/>
            <person name="Linz B."/>
            <person name="Raddatz G."/>
            <person name="Lanz C."/>
            <person name="Keller H."/>
            <person name="Morelli G."/>
            <person name="Gressmann H."/>
            <person name="Achtman M."/>
            <person name="Schuster S.C."/>
        </authorList>
    </citation>
    <scope>NUCLEOTIDE SEQUENCE [LARGE SCALE GENOMIC DNA]</scope>
    <source>
        <strain>Sheeba</strain>
    </source>
</reference>
<dbReference type="EC" id="5.4.99.27" evidence="1"/>
<dbReference type="EMBL" id="AM260522">
    <property type="protein sequence ID" value="CAJ99853.1"/>
    <property type="molecule type" value="Genomic_DNA"/>
</dbReference>
<dbReference type="RefSeq" id="WP_011577961.1">
    <property type="nucleotide sequence ID" value="NC_008229.1"/>
</dbReference>
<dbReference type="SMR" id="Q17WX3"/>
<dbReference type="STRING" id="382638.Hac_1089"/>
<dbReference type="GeneID" id="31758450"/>
<dbReference type="KEGG" id="hac:Hac_1089"/>
<dbReference type="eggNOG" id="COG0585">
    <property type="taxonomic scope" value="Bacteria"/>
</dbReference>
<dbReference type="HOGENOM" id="CLU_005281_4_0_7"/>
<dbReference type="OrthoDB" id="1550679at2"/>
<dbReference type="BioCyc" id="HACI382638:HAC_RS04675-MONOMER"/>
<dbReference type="Proteomes" id="UP000000775">
    <property type="component" value="Chromosome"/>
</dbReference>
<dbReference type="GO" id="GO:0005829">
    <property type="term" value="C:cytosol"/>
    <property type="evidence" value="ECO:0007669"/>
    <property type="project" value="TreeGrafter"/>
</dbReference>
<dbReference type="GO" id="GO:0003723">
    <property type="term" value="F:RNA binding"/>
    <property type="evidence" value="ECO:0007669"/>
    <property type="project" value="InterPro"/>
</dbReference>
<dbReference type="GO" id="GO:0160150">
    <property type="term" value="F:tRNA pseudouridine(13) synthase activity"/>
    <property type="evidence" value="ECO:0007669"/>
    <property type="project" value="UniProtKB-EC"/>
</dbReference>
<dbReference type="GO" id="GO:0031119">
    <property type="term" value="P:tRNA pseudouridine synthesis"/>
    <property type="evidence" value="ECO:0007669"/>
    <property type="project" value="UniProtKB-UniRule"/>
</dbReference>
<dbReference type="CDD" id="cd02575">
    <property type="entry name" value="PseudoU_synth_EcTruD"/>
    <property type="match status" value="1"/>
</dbReference>
<dbReference type="FunFam" id="3.30.2350.20:FF:000008">
    <property type="entry name" value="tRNA pseudouridine synthase D"/>
    <property type="match status" value="1"/>
</dbReference>
<dbReference type="Gene3D" id="3.30.2350.20">
    <property type="entry name" value="TruD, catalytic domain"/>
    <property type="match status" value="1"/>
</dbReference>
<dbReference type="HAMAP" id="MF_01082">
    <property type="entry name" value="TruD"/>
    <property type="match status" value="1"/>
</dbReference>
<dbReference type="InterPro" id="IPR020103">
    <property type="entry name" value="PsdUridine_synth_cat_dom_sf"/>
</dbReference>
<dbReference type="InterPro" id="IPR001656">
    <property type="entry name" value="PsdUridine_synth_TruD"/>
</dbReference>
<dbReference type="InterPro" id="IPR020119">
    <property type="entry name" value="PsdUridine_synth_TruD_CS"/>
</dbReference>
<dbReference type="InterPro" id="IPR011760">
    <property type="entry name" value="PsdUridine_synth_TruD_insert"/>
</dbReference>
<dbReference type="InterPro" id="IPR042214">
    <property type="entry name" value="TruD_catalytic"/>
</dbReference>
<dbReference type="InterPro" id="IPR050170">
    <property type="entry name" value="TruD_pseudoU_synthase"/>
</dbReference>
<dbReference type="NCBIfam" id="NF002154">
    <property type="entry name" value="PRK00984.1-3"/>
    <property type="match status" value="1"/>
</dbReference>
<dbReference type="NCBIfam" id="TIGR00094">
    <property type="entry name" value="tRNA_TruD_broad"/>
    <property type="match status" value="1"/>
</dbReference>
<dbReference type="PANTHER" id="PTHR47811">
    <property type="entry name" value="TRNA PSEUDOURIDINE SYNTHASE D"/>
    <property type="match status" value="1"/>
</dbReference>
<dbReference type="PANTHER" id="PTHR47811:SF1">
    <property type="entry name" value="TRNA PSEUDOURIDINE SYNTHASE D"/>
    <property type="match status" value="1"/>
</dbReference>
<dbReference type="Pfam" id="PF01142">
    <property type="entry name" value="TruD"/>
    <property type="match status" value="2"/>
</dbReference>
<dbReference type="PIRSF" id="PIRSF037016">
    <property type="entry name" value="Pseudouridin_synth_euk_prd"/>
    <property type="match status" value="1"/>
</dbReference>
<dbReference type="SUPFAM" id="SSF55120">
    <property type="entry name" value="Pseudouridine synthase"/>
    <property type="match status" value="1"/>
</dbReference>
<dbReference type="PROSITE" id="PS50984">
    <property type="entry name" value="TRUD"/>
    <property type="match status" value="1"/>
</dbReference>
<dbReference type="PROSITE" id="PS01268">
    <property type="entry name" value="UPF0024"/>
    <property type="match status" value="1"/>
</dbReference>
<comment type="function">
    <text evidence="1">Responsible for synthesis of pseudouridine from uracil-13 in transfer RNAs.</text>
</comment>
<comment type="catalytic activity">
    <reaction evidence="1">
        <text>uridine(13) in tRNA = pseudouridine(13) in tRNA</text>
        <dbReference type="Rhea" id="RHEA:42540"/>
        <dbReference type="Rhea" id="RHEA-COMP:10105"/>
        <dbReference type="Rhea" id="RHEA-COMP:10106"/>
        <dbReference type="ChEBI" id="CHEBI:65314"/>
        <dbReference type="ChEBI" id="CHEBI:65315"/>
        <dbReference type="EC" id="5.4.99.27"/>
    </reaction>
</comment>
<comment type="similarity">
    <text evidence="1">Belongs to the pseudouridine synthase TruD family.</text>
</comment>
<organism>
    <name type="scientific">Helicobacter acinonychis (strain Sheeba)</name>
    <dbReference type="NCBI Taxonomy" id="382638"/>
    <lineage>
        <taxon>Bacteria</taxon>
        <taxon>Pseudomonadati</taxon>
        <taxon>Campylobacterota</taxon>
        <taxon>Epsilonproteobacteria</taxon>
        <taxon>Campylobacterales</taxon>
        <taxon>Helicobacteraceae</taxon>
        <taxon>Helicobacter</taxon>
    </lineage>
</organism>
<name>TRUD_HELAH</name>
<proteinExistence type="inferred from homology"/>
<evidence type="ECO:0000255" key="1">
    <source>
        <dbReference type="HAMAP-Rule" id="MF_01082"/>
    </source>
</evidence>
<protein>
    <recommendedName>
        <fullName evidence="1">tRNA pseudouridine synthase D</fullName>
        <ecNumber evidence="1">5.4.99.27</ecNumber>
    </recommendedName>
    <alternativeName>
        <fullName evidence="1">tRNA pseudouridine(13) synthase</fullName>
    </alternativeName>
    <alternativeName>
        <fullName evidence="1">tRNA pseudouridylate synthase D</fullName>
    </alternativeName>
    <alternativeName>
        <fullName evidence="1">tRNA-uridine isomerase D</fullName>
    </alternativeName>
</protein>
<feature type="chain" id="PRO_1000084745" description="tRNA pseudouridine synthase D">
    <location>
        <begin position="1"/>
        <end position="381"/>
    </location>
</feature>
<feature type="domain" description="TRUD" evidence="1">
    <location>
        <begin position="160"/>
        <end position="335"/>
    </location>
</feature>
<feature type="active site" description="Nucleophile" evidence="1">
    <location>
        <position position="81"/>
    </location>
</feature>
<gene>
    <name evidence="1" type="primary">truD</name>
    <name type="ordered locus">Hac_1089</name>
</gene>
<accession>Q17WX3</accession>
<keyword id="KW-0413">Isomerase</keyword>
<keyword id="KW-0819">tRNA processing</keyword>